<gene>
    <name evidence="2" type="primary">tuf</name>
    <name type="ordered locus">tlr1750</name>
</gene>
<name>EFTU_THEVB</name>
<organism>
    <name type="scientific">Thermosynechococcus vestitus (strain NIES-2133 / IAM M-273 / BP-1)</name>
    <dbReference type="NCBI Taxonomy" id="197221"/>
    <lineage>
        <taxon>Bacteria</taxon>
        <taxon>Bacillati</taxon>
        <taxon>Cyanobacteriota</taxon>
        <taxon>Cyanophyceae</taxon>
        <taxon>Acaryochloridales</taxon>
        <taxon>Thermosynechococcaceae</taxon>
        <taxon>Thermosynechococcus</taxon>
    </lineage>
</organism>
<feature type="chain" id="PRO_1000015767" description="Elongation factor Tu">
    <location>
        <begin position="1"/>
        <end position="409"/>
    </location>
</feature>
<feature type="domain" description="tr-type G">
    <location>
        <begin position="10"/>
        <end position="214"/>
    </location>
</feature>
<feature type="region of interest" description="G1" evidence="1">
    <location>
        <begin position="19"/>
        <end position="26"/>
    </location>
</feature>
<feature type="region of interest" description="G2" evidence="1">
    <location>
        <begin position="60"/>
        <end position="64"/>
    </location>
</feature>
<feature type="region of interest" description="G3" evidence="1">
    <location>
        <begin position="81"/>
        <end position="84"/>
    </location>
</feature>
<feature type="region of interest" description="G4" evidence="1">
    <location>
        <begin position="136"/>
        <end position="139"/>
    </location>
</feature>
<feature type="region of interest" description="G5" evidence="1">
    <location>
        <begin position="174"/>
        <end position="176"/>
    </location>
</feature>
<feature type="binding site" evidence="2">
    <location>
        <begin position="19"/>
        <end position="26"/>
    </location>
    <ligand>
        <name>GTP</name>
        <dbReference type="ChEBI" id="CHEBI:37565"/>
    </ligand>
</feature>
<feature type="binding site" evidence="2">
    <location>
        <position position="26"/>
    </location>
    <ligand>
        <name>Mg(2+)</name>
        <dbReference type="ChEBI" id="CHEBI:18420"/>
    </ligand>
</feature>
<feature type="binding site" evidence="2">
    <location>
        <begin position="81"/>
        <end position="85"/>
    </location>
    <ligand>
        <name>GTP</name>
        <dbReference type="ChEBI" id="CHEBI:37565"/>
    </ligand>
</feature>
<feature type="binding site" evidence="2">
    <location>
        <begin position="136"/>
        <end position="139"/>
    </location>
    <ligand>
        <name>GTP</name>
        <dbReference type="ChEBI" id="CHEBI:37565"/>
    </ligand>
</feature>
<dbReference type="EC" id="3.6.5.3" evidence="2"/>
<dbReference type="EMBL" id="BA000039">
    <property type="protein sequence ID" value="BAC09302.1"/>
    <property type="molecule type" value="Genomic_DNA"/>
</dbReference>
<dbReference type="RefSeq" id="NP_682540.1">
    <property type="nucleotide sequence ID" value="NC_004113.1"/>
</dbReference>
<dbReference type="RefSeq" id="WP_011057587.1">
    <property type="nucleotide sequence ID" value="NC_004113.1"/>
</dbReference>
<dbReference type="SMR" id="Q8DI42"/>
<dbReference type="STRING" id="197221.gene:10748354"/>
<dbReference type="EnsemblBacteria" id="BAC09302">
    <property type="protein sequence ID" value="BAC09302"/>
    <property type="gene ID" value="BAC09302"/>
</dbReference>
<dbReference type="KEGG" id="tel:tlr1750"/>
<dbReference type="PATRIC" id="fig|197221.4.peg.1831"/>
<dbReference type="eggNOG" id="COG0050">
    <property type="taxonomic scope" value="Bacteria"/>
</dbReference>
<dbReference type="Proteomes" id="UP000000440">
    <property type="component" value="Chromosome"/>
</dbReference>
<dbReference type="GO" id="GO:0005829">
    <property type="term" value="C:cytosol"/>
    <property type="evidence" value="ECO:0007669"/>
    <property type="project" value="TreeGrafter"/>
</dbReference>
<dbReference type="GO" id="GO:0005525">
    <property type="term" value="F:GTP binding"/>
    <property type="evidence" value="ECO:0007669"/>
    <property type="project" value="UniProtKB-UniRule"/>
</dbReference>
<dbReference type="GO" id="GO:0003924">
    <property type="term" value="F:GTPase activity"/>
    <property type="evidence" value="ECO:0007669"/>
    <property type="project" value="InterPro"/>
</dbReference>
<dbReference type="GO" id="GO:0003746">
    <property type="term" value="F:translation elongation factor activity"/>
    <property type="evidence" value="ECO:0007669"/>
    <property type="project" value="UniProtKB-UniRule"/>
</dbReference>
<dbReference type="CDD" id="cd01884">
    <property type="entry name" value="EF_Tu"/>
    <property type="match status" value="1"/>
</dbReference>
<dbReference type="CDD" id="cd03697">
    <property type="entry name" value="EFTU_II"/>
    <property type="match status" value="1"/>
</dbReference>
<dbReference type="CDD" id="cd03707">
    <property type="entry name" value="EFTU_III"/>
    <property type="match status" value="1"/>
</dbReference>
<dbReference type="FunFam" id="2.40.30.10:FF:000001">
    <property type="entry name" value="Elongation factor Tu"/>
    <property type="match status" value="1"/>
</dbReference>
<dbReference type="FunFam" id="2.40.30.10:FF:000046">
    <property type="entry name" value="Elongation factor Tu"/>
    <property type="match status" value="1"/>
</dbReference>
<dbReference type="FunFam" id="3.40.50.300:FF:000003">
    <property type="entry name" value="Elongation factor Tu"/>
    <property type="match status" value="1"/>
</dbReference>
<dbReference type="Gene3D" id="3.40.50.300">
    <property type="entry name" value="P-loop containing nucleotide triphosphate hydrolases"/>
    <property type="match status" value="1"/>
</dbReference>
<dbReference type="Gene3D" id="2.40.30.10">
    <property type="entry name" value="Translation factors"/>
    <property type="match status" value="2"/>
</dbReference>
<dbReference type="HAMAP" id="MF_00118_B">
    <property type="entry name" value="EF_Tu_B"/>
    <property type="match status" value="1"/>
</dbReference>
<dbReference type="InterPro" id="IPR041709">
    <property type="entry name" value="EF-Tu_GTP-bd"/>
</dbReference>
<dbReference type="InterPro" id="IPR050055">
    <property type="entry name" value="EF-Tu_GTPase"/>
</dbReference>
<dbReference type="InterPro" id="IPR004161">
    <property type="entry name" value="EFTu-like_2"/>
</dbReference>
<dbReference type="InterPro" id="IPR033720">
    <property type="entry name" value="EFTU_2"/>
</dbReference>
<dbReference type="InterPro" id="IPR031157">
    <property type="entry name" value="G_TR_CS"/>
</dbReference>
<dbReference type="InterPro" id="IPR027417">
    <property type="entry name" value="P-loop_NTPase"/>
</dbReference>
<dbReference type="InterPro" id="IPR005225">
    <property type="entry name" value="Small_GTP-bd"/>
</dbReference>
<dbReference type="InterPro" id="IPR000795">
    <property type="entry name" value="T_Tr_GTP-bd_dom"/>
</dbReference>
<dbReference type="InterPro" id="IPR009000">
    <property type="entry name" value="Transl_B-barrel_sf"/>
</dbReference>
<dbReference type="InterPro" id="IPR009001">
    <property type="entry name" value="Transl_elong_EF1A/Init_IF2_C"/>
</dbReference>
<dbReference type="InterPro" id="IPR004541">
    <property type="entry name" value="Transl_elong_EFTu/EF1A_bac/org"/>
</dbReference>
<dbReference type="InterPro" id="IPR004160">
    <property type="entry name" value="Transl_elong_EFTu/EF1A_C"/>
</dbReference>
<dbReference type="NCBIfam" id="TIGR00485">
    <property type="entry name" value="EF-Tu"/>
    <property type="match status" value="1"/>
</dbReference>
<dbReference type="NCBIfam" id="NF000766">
    <property type="entry name" value="PRK00049.1"/>
    <property type="match status" value="1"/>
</dbReference>
<dbReference type="NCBIfam" id="NF009372">
    <property type="entry name" value="PRK12735.1"/>
    <property type="match status" value="1"/>
</dbReference>
<dbReference type="NCBIfam" id="NF009373">
    <property type="entry name" value="PRK12736.1"/>
    <property type="match status" value="1"/>
</dbReference>
<dbReference type="NCBIfam" id="TIGR00231">
    <property type="entry name" value="small_GTP"/>
    <property type="match status" value="1"/>
</dbReference>
<dbReference type="PANTHER" id="PTHR43721:SF22">
    <property type="entry name" value="ELONGATION FACTOR TU, MITOCHONDRIAL"/>
    <property type="match status" value="1"/>
</dbReference>
<dbReference type="PANTHER" id="PTHR43721">
    <property type="entry name" value="ELONGATION FACTOR TU-RELATED"/>
    <property type="match status" value="1"/>
</dbReference>
<dbReference type="Pfam" id="PF00009">
    <property type="entry name" value="GTP_EFTU"/>
    <property type="match status" value="1"/>
</dbReference>
<dbReference type="Pfam" id="PF03144">
    <property type="entry name" value="GTP_EFTU_D2"/>
    <property type="match status" value="1"/>
</dbReference>
<dbReference type="Pfam" id="PF03143">
    <property type="entry name" value="GTP_EFTU_D3"/>
    <property type="match status" value="1"/>
</dbReference>
<dbReference type="PRINTS" id="PR00315">
    <property type="entry name" value="ELONGATNFCT"/>
</dbReference>
<dbReference type="SUPFAM" id="SSF50465">
    <property type="entry name" value="EF-Tu/eEF-1alpha/eIF2-gamma C-terminal domain"/>
    <property type="match status" value="1"/>
</dbReference>
<dbReference type="SUPFAM" id="SSF52540">
    <property type="entry name" value="P-loop containing nucleoside triphosphate hydrolases"/>
    <property type="match status" value="1"/>
</dbReference>
<dbReference type="SUPFAM" id="SSF50447">
    <property type="entry name" value="Translation proteins"/>
    <property type="match status" value="1"/>
</dbReference>
<dbReference type="PROSITE" id="PS00301">
    <property type="entry name" value="G_TR_1"/>
    <property type="match status" value="1"/>
</dbReference>
<dbReference type="PROSITE" id="PS51722">
    <property type="entry name" value="G_TR_2"/>
    <property type="match status" value="1"/>
</dbReference>
<proteinExistence type="inferred from homology"/>
<reference key="1">
    <citation type="journal article" date="2002" name="DNA Res.">
        <title>Complete genome structure of the thermophilic cyanobacterium Thermosynechococcus elongatus BP-1.</title>
        <authorList>
            <person name="Nakamura Y."/>
            <person name="Kaneko T."/>
            <person name="Sato S."/>
            <person name="Ikeuchi M."/>
            <person name="Katoh H."/>
            <person name="Sasamoto S."/>
            <person name="Watanabe A."/>
            <person name="Iriguchi M."/>
            <person name="Kawashima K."/>
            <person name="Kimura T."/>
            <person name="Kishida Y."/>
            <person name="Kiyokawa C."/>
            <person name="Kohara M."/>
            <person name="Matsumoto M."/>
            <person name="Matsuno A."/>
            <person name="Nakazaki N."/>
            <person name="Shimpo S."/>
            <person name="Sugimoto M."/>
            <person name="Takeuchi C."/>
            <person name="Yamada M."/>
            <person name="Tabata S."/>
        </authorList>
    </citation>
    <scope>NUCLEOTIDE SEQUENCE [LARGE SCALE GENOMIC DNA]</scope>
    <source>
        <strain>NIES-2133 / IAM M-273 / BP-1</strain>
    </source>
</reference>
<accession>Q8DI42</accession>
<evidence type="ECO:0000250" key="1"/>
<evidence type="ECO:0000255" key="2">
    <source>
        <dbReference type="HAMAP-Rule" id="MF_00118"/>
    </source>
</evidence>
<protein>
    <recommendedName>
        <fullName evidence="2">Elongation factor Tu</fullName>
        <shortName evidence="2">EF-Tu</shortName>
        <ecNumber evidence="2">3.6.5.3</ecNumber>
    </recommendedName>
</protein>
<sequence>MARAKFERTKPHVNVGTIGHVDHGKTTLTAAITMTLAAQGKAQARKYDEIDAAPEEKARGITINTAHVEYETEKRHYAHVDCPGHADYVKNMITGAAQMDGAILVVAATDGAMPQTKEHILLARQVGVPSIVVFLNKVDMVDDEELLELVELELRELLNEYEFPGDEVPIIRGSGLKALEAMTANPKTLRGENEWVDKIYELMDAVDNYIPTPERDVDKPFLMAVEDVFSITGRGTVATGRIERGRIKLNETVELVGLRETRTTTVTGIEMFKKSLEEGIAGDNAGLLLRGLKKEDVERGMVIAKPGSITPHTKFEGEVYVLTEKEGGRKTPFFAGYRPQFYVRTTDVTGTITSFTSDDGSAAEMVMPGDRIKMTVELIQPIAIEQGMRFAIREGGRTIGAGVVSKIIE</sequence>
<keyword id="KW-0963">Cytoplasm</keyword>
<keyword id="KW-0251">Elongation factor</keyword>
<keyword id="KW-0342">GTP-binding</keyword>
<keyword id="KW-0378">Hydrolase</keyword>
<keyword id="KW-0460">Magnesium</keyword>
<keyword id="KW-0479">Metal-binding</keyword>
<keyword id="KW-0547">Nucleotide-binding</keyword>
<keyword id="KW-0648">Protein biosynthesis</keyword>
<keyword id="KW-1185">Reference proteome</keyword>
<comment type="function">
    <text evidence="2">GTP hydrolase that promotes the GTP-dependent binding of aminoacyl-tRNA to the A-site of ribosomes during protein biosynthesis.</text>
</comment>
<comment type="catalytic activity">
    <reaction evidence="2">
        <text>GTP + H2O = GDP + phosphate + H(+)</text>
        <dbReference type="Rhea" id="RHEA:19669"/>
        <dbReference type="ChEBI" id="CHEBI:15377"/>
        <dbReference type="ChEBI" id="CHEBI:15378"/>
        <dbReference type="ChEBI" id="CHEBI:37565"/>
        <dbReference type="ChEBI" id="CHEBI:43474"/>
        <dbReference type="ChEBI" id="CHEBI:58189"/>
        <dbReference type="EC" id="3.6.5.3"/>
    </reaction>
    <physiologicalReaction direction="left-to-right" evidence="2">
        <dbReference type="Rhea" id="RHEA:19670"/>
    </physiologicalReaction>
</comment>
<comment type="subunit">
    <text evidence="2">Monomer.</text>
</comment>
<comment type="subcellular location">
    <subcellularLocation>
        <location evidence="2">Cytoplasm</location>
    </subcellularLocation>
</comment>
<comment type="similarity">
    <text evidence="2">Belongs to the TRAFAC class translation factor GTPase superfamily. Classic translation factor GTPase family. EF-Tu/EF-1A subfamily.</text>
</comment>